<accession>P27925</accession>
<accession>A5PK02</accession>
<accession>O18957</accession>
<feature type="chain" id="PRO_0000076600" description="Cyclic AMP-responsive element-binding protein 1">
    <location>
        <begin position="1"/>
        <end position="325"/>
    </location>
</feature>
<feature type="domain" description="KID" evidence="5">
    <location>
        <begin position="85"/>
        <end position="144"/>
    </location>
</feature>
<feature type="domain" description="bZIP" evidence="6">
    <location>
        <begin position="267"/>
        <end position="325"/>
    </location>
</feature>
<feature type="region of interest" description="Disordered" evidence="7">
    <location>
        <begin position="1"/>
        <end position="27"/>
    </location>
</feature>
<feature type="region of interest" description="Disordered" evidence="7">
    <location>
        <begin position="92"/>
        <end position="111"/>
    </location>
</feature>
<feature type="region of interest" description="Disordered" evidence="7">
    <location>
        <begin position="124"/>
        <end position="146"/>
    </location>
</feature>
<feature type="region of interest" description="Basic motif" evidence="6">
    <location>
        <begin position="268"/>
        <end position="293"/>
    </location>
</feature>
<feature type="region of interest" description="Leucine-zipper" evidence="6">
    <location>
        <begin position="295"/>
        <end position="316"/>
    </location>
</feature>
<feature type="compositionally biased region" description="Polar residues" evidence="7">
    <location>
        <begin position="1"/>
        <end position="11"/>
    </location>
</feature>
<feature type="compositionally biased region" description="Polar residues" evidence="7">
    <location>
        <begin position="18"/>
        <end position="27"/>
    </location>
</feature>
<feature type="site" description="Required for binding TORCs" evidence="1">
    <location>
        <position position="298"/>
    </location>
</feature>
<feature type="modified residue" description="Phosphoserine; by CaMK1, CaMK2, CaMK4, PKB/AKT1 or PKB/AKT2, RPS6KA3, RPS6KA4, RPS6KA5 and SGK1" evidence="5 8">
    <location>
        <position position="117"/>
    </location>
</feature>
<feature type="modified residue" description="Phosphoserine; by CaMK2" evidence="2 5">
    <location>
        <position position="126"/>
    </location>
</feature>
<feature type="modified residue" description="Phosphoserine; by HIPK2" evidence="3 5">
    <location>
        <position position="255"/>
    </location>
</feature>
<feature type="cross-link" description="Glycyl lysine isopeptide (Lys-Gly) (interchain with G-Cter in SUMO2)" evidence="3">
    <location>
        <position position="120"/>
    </location>
</feature>
<feature type="cross-link" description="Glycyl lysine isopeptide (Lys-Gly) (interchain with G-Cter in SUMO1)" evidence="3">
    <location>
        <position position="269"/>
    </location>
</feature>
<feature type="cross-link" description="Glycyl lysine isopeptide (Lys-Gly) (interchain with G-Cter in SUMO1)" evidence="3">
    <location>
        <position position="288"/>
    </location>
</feature>
<feature type="sequence conflict" description="In Ref. 1; CAA40347." evidence="12" ref="1">
    <original>QT</original>
    <variation>TK</variation>
    <location>
        <begin position="60"/>
        <end position="61"/>
    </location>
</feature>
<evidence type="ECO:0000250" key="1"/>
<evidence type="ECO:0000250" key="2">
    <source>
        <dbReference type="UniProtKB" id="P15337"/>
    </source>
</evidence>
<evidence type="ECO:0000250" key="3">
    <source>
        <dbReference type="UniProtKB" id="P16220"/>
    </source>
</evidence>
<evidence type="ECO:0000250" key="4">
    <source>
        <dbReference type="UniProtKB" id="Q01147"/>
    </source>
</evidence>
<evidence type="ECO:0000255" key="5">
    <source>
        <dbReference type="PROSITE-ProRule" id="PRU00312"/>
    </source>
</evidence>
<evidence type="ECO:0000255" key="6">
    <source>
        <dbReference type="PROSITE-ProRule" id="PRU00978"/>
    </source>
</evidence>
<evidence type="ECO:0000256" key="7">
    <source>
        <dbReference type="SAM" id="MobiDB-lite"/>
    </source>
</evidence>
<evidence type="ECO:0000269" key="8">
    <source>
    </source>
</evidence>
<evidence type="ECO:0000269" key="9">
    <source>
    </source>
</evidence>
<evidence type="ECO:0000269" key="10">
    <source>
    </source>
</evidence>
<evidence type="ECO:0000269" key="11">
    <source>
    </source>
</evidence>
<evidence type="ECO:0000305" key="12"/>
<proteinExistence type="evidence at protein level"/>
<protein>
    <recommendedName>
        <fullName>Cyclic AMP-responsive element-binding protein 1</fullName>
        <shortName>CREB-1</shortName>
        <shortName>cAMP-responsive element-binding protein 1</shortName>
    </recommendedName>
    <alternativeName>
        <fullName>Cyclic AMP-responsive DNA-binding protein</fullName>
    </alternativeName>
</protein>
<sequence length="325" mass="34877">MESGAENQQSGDAAVTEAESQQMTVQAQPQIATLAQVSMPAAHATSSAPTVTLVQLPNGQTVQVHGVIQAAQPSVIQSPQVQTVQISTIAESEDSQESVDSVTDSQKRREILSRRPSYRKILNDLSSDAPGVPRIEEEKSEEETSAPAITTVTVPTPIYQTSSGQYIAITQGGAIQLANNGTDGVQGLQTLTMTNAAATQPGTTILQYAQTTDGQQILVPSNQVVVQAASGDVQTYQIRTAPTSTIAPGVVMASSPALPTQPAEEAARKREVRLMKNREAARECRRKKKEYVKCLENRVAVLENQNKTLIEELKALKDLYCHKSD</sequence>
<comment type="function">
    <text evidence="3 4 9 10 11">Phosphorylation-dependent transcription factor that stimulates transcription upon binding to the DNA cAMP response element (CRE), a sequence present in many viral and cellular promoters (PubMed:1309910, PubMed:8057465, PubMed:8627725). Transcription activation is enhanced by the TORC coactivators which act independently of Ser-117 phosphorylation (By similarity). Involved in different cellular processes including the synchronization of circadian rhythmicity and the differentiation of adipose cells (By similarity). Regulates the expression of apoptotic and inflammatory response factors in cardiomyocytes in response to ERFE-mediated activation of AKT signaling (By similarity).</text>
</comment>
<comment type="subunit">
    <text evidence="3 4">Interacts with PPRC1. Binds DNA as a dimer. This dimer is stabilized by magnesium ions. Interacts, through the bZIP domain, with the coactivators CRTC1/TORC1, CRTC2/TORC2 and CRTC3/TORC3. When phosphorylated on Ser-117, binds CREBBP (By similarity). Interacts with CREBL2; regulates CREB1 phosphorylation, stability and transcriptional activity (By similarity). Interacts (phosphorylated form) with TOX3. Interacts with ARRB1. Binds to HIPK2. Interacts with SGK1. Interacts with TSSK4; this interaction facilitates phosphorylation on Ser-117. Forms a complex with KMT2A and CREBBP (By similarity). Interacts with TOX4; CREB1 is required for full induction of TOX4-dependent activity and the interaction is increased by cAMP and inhibited by insulin (By similarity).</text>
</comment>
<comment type="subcellular location">
    <subcellularLocation>
        <location>Nucleus</location>
    </subcellularLocation>
</comment>
<comment type="PTM">
    <text evidence="1">Sumoylated with SUMO1. Sumoylation on Lys-288, but not on Lys-269, is required for nuclear localization of this protein. Sumoylation is enhanced under hypoxia, promoting nuclear localization and stabilization (By similarity).</text>
</comment>
<comment type="PTM">
    <text evidence="3">Stimulated by phosphorylation. Phosphorylation of both Ser-117 and Ser-126 in the SCN regulates the activity of CREB and participates in circadian rhythm generation. Phosphorylation of Ser-117 allows CREBBP binding. Phosphorylated upon calcium influx by CaMK4 and CaMK2 on Ser-117. CaMK4 is much more potent than CaMK2 in activating CREB. Phosphorylated by CaMK2 on Ser-126. Phosphorylation of Ser-126 blocks CREB-mediated transcription even when Ser-117 is phosphorylated. Phosphorylated by CaMK1. Phosphorylation of Ser-255 by HIPK2 in response to genotoxic stress promotes CREB1 activity, facilitating the recruitment of the coactivator CBP. Phosphorylated at Ser-117 by RPS6KA3, RPS6KA4 and RPS6KA5 in response to mitogenic or stress stimuli. CREBL2 positively regulates phosphorylation at Ser-117 thereby stimulating CREB1 transcriptional activity. In liver, phosphorylation is induced by fasting or glucagon in a circadian fashion (By similarity). Phosphorylated by TSSK4 on Ser-117 (By similarity).</text>
</comment>
<comment type="similarity">
    <text evidence="12">Belongs to the bZIP family.</text>
</comment>
<gene>
    <name type="primary">CREB1</name>
    <name type="synonym">CREB</name>
    <name type="synonym">CREB2</name>
</gene>
<keyword id="KW-0010">Activator</keyword>
<keyword id="KW-0090">Biological rhythms</keyword>
<keyword id="KW-0221">Differentiation</keyword>
<keyword id="KW-0238">DNA-binding</keyword>
<keyword id="KW-1017">Isopeptide bond</keyword>
<keyword id="KW-0539">Nucleus</keyword>
<keyword id="KW-0597">Phosphoprotein</keyword>
<keyword id="KW-1185">Reference proteome</keyword>
<keyword id="KW-0804">Transcription</keyword>
<keyword id="KW-0805">Transcription regulation</keyword>
<keyword id="KW-0832">Ubl conjugation</keyword>
<name>CREB1_BOVIN</name>
<dbReference type="EMBL" id="X57031">
    <property type="protein sequence ID" value="CAA40347.1"/>
    <property type="molecule type" value="mRNA"/>
</dbReference>
<dbReference type="EMBL" id="AF006042">
    <property type="protein sequence ID" value="AAB62381.1"/>
    <property type="molecule type" value="mRNA"/>
</dbReference>
<dbReference type="EMBL" id="BC142303">
    <property type="protein sequence ID" value="AAI42304.1"/>
    <property type="molecule type" value="mRNA"/>
</dbReference>
<dbReference type="PIR" id="S23007">
    <property type="entry name" value="S23007"/>
</dbReference>
<dbReference type="RefSeq" id="NP_776710.1">
    <property type="nucleotide sequence ID" value="NM_174285.1"/>
</dbReference>
<dbReference type="BMRB" id="P27925"/>
<dbReference type="SMR" id="P27925"/>
<dbReference type="FunCoup" id="P27925">
    <property type="interactions" value="538"/>
</dbReference>
<dbReference type="STRING" id="9913.ENSBTAP00000007201"/>
<dbReference type="iPTMnet" id="P27925"/>
<dbReference type="PaxDb" id="9913-ENSBTAP00000007201"/>
<dbReference type="ABCD" id="P27925">
    <property type="antibodies" value="1 sequenced antibody"/>
</dbReference>
<dbReference type="GeneID" id="281713"/>
<dbReference type="KEGG" id="bta:281713"/>
<dbReference type="CTD" id="1385"/>
<dbReference type="eggNOG" id="KOG3584">
    <property type="taxonomic scope" value="Eukaryota"/>
</dbReference>
<dbReference type="HOGENOM" id="CLU_042675_0_1_1"/>
<dbReference type="InParanoid" id="P27925"/>
<dbReference type="OrthoDB" id="5970722at2759"/>
<dbReference type="Proteomes" id="UP000009136">
    <property type="component" value="Unplaced"/>
</dbReference>
<dbReference type="GO" id="GO:1990589">
    <property type="term" value="C:ATF4-CREB1 transcription factor complex"/>
    <property type="evidence" value="ECO:0000318"/>
    <property type="project" value="GO_Central"/>
</dbReference>
<dbReference type="GO" id="GO:0005634">
    <property type="term" value="C:nucleus"/>
    <property type="evidence" value="ECO:0000250"/>
    <property type="project" value="UniProtKB"/>
</dbReference>
<dbReference type="GO" id="GO:0035497">
    <property type="term" value="F:cAMP response element binding"/>
    <property type="evidence" value="ECO:0000318"/>
    <property type="project" value="GO_Central"/>
</dbReference>
<dbReference type="GO" id="GO:0000981">
    <property type="term" value="F:DNA-binding transcription factor activity, RNA polymerase II-specific"/>
    <property type="evidence" value="ECO:0000318"/>
    <property type="project" value="GO_Central"/>
</dbReference>
<dbReference type="GO" id="GO:0030154">
    <property type="term" value="P:cell differentiation"/>
    <property type="evidence" value="ECO:0007669"/>
    <property type="project" value="UniProtKB-KW"/>
</dbReference>
<dbReference type="GO" id="GO:0007623">
    <property type="term" value="P:circadian rhythm"/>
    <property type="evidence" value="ECO:0000250"/>
    <property type="project" value="UniProtKB"/>
</dbReference>
<dbReference type="GO" id="GO:0043066">
    <property type="term" value="P:negative regulation of apoptotic process"/>
    <property type="evidence" value="ECO:0000250"/>
    <property type="project" value="UniProtKB"/>
</dbReference>
<dbReference type="GO" id="GO:0045893">
    <property type="term" value="P:positive regulation of DNA-templated transcription"/>
    <property type="evidence" value="ECO:0000250"/>
    <property type="project" value="UniProtKB"/>
</dbReference>
<dbReference type="GO" id="GO:0045600">
    <property type="term" value="P:positive regulation of fat cell differentiation"/>
    <property type="evidence" value="ECO:0000250"/>
    <property type="project" value="UniProtKB"/>
</dbReference>
<dbReference type="GO" id="GO:0046889">
    <property type="term" value="P:positive regulation of lipid biosynthetic process"/>
    <property type="evidence" value="ECO:0000250"/>
    <property type="project" value="UniProtKB"/>
</dbReference>
<dbReference type="GO" id="GO:0045944">
    <property type="term" value="P:positive regulation of transcription by RNA polymerase II"/>
    <property type="evidence" value="ECO:0000250"/>
    <property type="project" value="UniProtKB"/>
</dbReference>
<dbReference type="GO" id="GO:0050821">
    <property type="term" value="P:protein stabilization"/>
    <property type="evidence" value="ECO:0000250"/>
    <property type="project" value="UniProtKB"/>
</dbReference>
<dbReference type="GO" id="GO:0006357">
    <property type="term" value="P:regulation of transcription by RNA polymerase II"/>
    <property type="evidence" value="ECO:0000318"/>
    <property type="project" value="GO_Central"/>
</dbReference>
<dbReference type="GO" id="GO:0033762">
    <property type="term" value="P:response to glucagon"/>
    <property type="evidence" value="ECO:0000250"/>
    <property type="project" value="UniProtKB"/>
</dbReference>
<dbReference type="CDD" id="cd14690">
    <property type="entry name" value="bZIP_CREB1"/>
    <property type="match status" value="1"/>
</dbReference>
<dbReference type="FunFam" id="1.20.5.170:FF:000003">
    <property type="entry name" value="cAMP-responsive element modulator isoform X2"/>
    <property type="match status" value="1"/>
</dbReference>
<dbReference type="Gene3D" id="1.20.5.170">
    <property type="match status" value="1"/>
</dbReference>
<dbReference type="InterPro" id="IPR004827">
    <property type="entry name" value="bZIP"/>
</dbReference>
<dbReference type="InterPro" id="IPR046347">
    <property type="entry name" value="bZIP_sf"/>
</dbReference>
<dbReference type="InterPro" id="IPR003102">
    <property type="entry name" value="CREB1-like_pKID"/>
</dbReference>
<dbReference type="InterPro" id="IPR001630">
    <property type="entry name" value="Leuzip_CREB"/>
</dbReference>
<dbReference type="PANTHER" id="PTHR45879">
    <property type="entry name" value="CYCLIC AMP RESPONSE ELEMENT-BINDING PROTEIN B"/>
    <property type="match status" value="1"/>
</dbReference>
<dbReference type="PANTHER" id="PTHR45879:SF1">
    <property type="entry name" value="CYCLIC AMP-RESPONSIVE ELEMENT-BINDING PROTEIN 1"/>
    <property type="match status" value="1"/>
</dbReference>
<dbReference type="Pfam" id="PF00170">
    <property type="entry name" value="bZIP_1"/>
    <property type="match status" value="1"/>
</dbReference>
<dbReference type="Pfam" id="PF02173">
    <property type="entry name" value="pKID"/>
    <property type="match status" value="1"/>
</dbReference>
<dbReference type="PRINTS" id="PR00041">
    <property type="entry name" value="LEUZIPPRCREB"/>
</dbReference>
<dbReference type="SMART" id="SM00338">
    <property type="entry name" value="BRLZ"/>
    <property type="match status" value="1"/>
</dbReference>
<dbReference type="SUPFAM" id="SSF57959">
    <property type="entry name" value="Leucine zipper domain"/>
    <property type="match status" value="1"/>
</dbReference>
<dbReference type="PROSITE" id="PS50217">
    <property type="entry name" value="BZIP"/>
    <property type="match status" value="1"/>
</dbReference>
<dbReference type="PROSITE" id="PS00036">
    <property type="entry name" value="BZIP_BASIC"/>
    <property type="match status" value="1"/>
</dbReference>
<dbReference type="PROSITE" id="PS50953">
    <property type="entry name" value="KID"/>
    <property type="match status" value="1"/>
</dbReference>
<reference key="1">
    <citation type="journal article" date="1991" name="DNA Seq.">
        <title>Nucleotide sequence of the bovine cyclic-AMP responsive DNA binding protein (CREB2) cDNA.</title>
        <authorList>
            <person name="Willems L."/>
            <person name="Kettmann R."/>
            <person name="Chen G."/>
            <person name="Portetelle D."/>
            <person name="Burny A."/>
            <person name="Derse D."/>
        </authorList>
    </citation>
    <scope>NUCLEOTIDE SEQUENCE [MRNA]</scope>
</reference>
<reference key="2">
    <citation type="submission" date="1997-05" db="EMBL/GenBank/DDBJ databases">
        <title>Nucleotide sequence of the CREB protein involved in bovine leukemia virus expression.</title>
        <authorList>
            <person name="Adam E."/>
            <person name="Twizere J.C."/>
            <person name="Burny A."/>
            <person name="Kettmann R."/>
            <person name="Willems L."/>
        </authorList>
    </citation>
    <scope>NUCLEOTIDE SEQUENCE [MRNA]</scope>
</reference>
<reference key="3">
    <citation type="submission" date="2007-06" db="EMBL/GenBank/DDBJ databases">
        <authorList>
            <consortium name="NIH - Mammalian Gene Collection (MGC) project"/>
        </authorList>
    </citation>
    <scope>NUCLEOTIDE SEQUENCE [LARGE SCALE MRNA]</scope>
    <source>
        <strain>Hereford</strain>
        <tissue>Thymus</tissue>
    </source>
</reference>
<reference key="4">
    <citation type="journal article" date="1992" name="J. Virol.">
        <title>A cyclic AMP-responsive DNA-binding protein (CREB2) is a cellular transactivator of the bovine leukemia virus long terminal repeat.</title>
        <authorList>
            <person name="Willems L."/>
            <person name="Kettmann R."/>
            <person name="Chen G."/>
            <person name="Portetelle D."/>
            <person name="Burny A."/>
            <person name="Derse D."/>
        </authorList>
    </citation>
    <scope>FUNCTION</scope>
</reference>
<reference key="5">
    <citation type="journal article" date="1994" name="J. Virol.">
        <title>Involvement of the cyclic AMP-responsive element binding protein in bovine leukemia virus expression in vivo.</title>
        <authorList>
            <person name="Adam E."/>
            <person name="Kerkhofs P."/>
            <person name="Mammerickx M."/>
            <person name="Kettmann R."/>
            <person name="Burny A."/>
            <person name="Droogmans L."/>
            <person name="Willems L."/>
        </authorList>
    </citation>
    <scope>FUNCTION</scope>
</reference>
<reference key="6">
    <citation type="journal article" date="1996" name="J. Virol.">
        <title>The CREB, ATF-1, and ATF-2 transcription factors from bovine leukemia virus-infected B lymphocytes activate viral expression.</title>
        <authorList>
            <person name="Adam E."/>
            <person name="Kerkhofs P."/>
            <person name="Mammerickx M."/>
            <person name="Burny A."/>
            <person name="Kettman R."/>
            <person name="Willems L."/>
        </authorList>
    </citation>
    <scope>FUNCTION</scope>
</reference>
<reference key="7">
    <citation type="journal article" date="2001" name="J. Neurochem.">
        <title>Angiotensin II promotes the phosphorylation of cyclic AMP-responsive element binding protein (CREB) at Ser133 through an ERK1/2-dependent mechanism.</title>
        <authorList>
            <person name="Cammarota M."/>
            <person name="Bevilaqua L.R."/>
            <person name="Dunkley P.R."/>
            <person name="Rostas J.A."/>
        </authorList>
    </citation>
    <scope>PHOSPHORYLATION AT SER-117</scope>
</reference>
<organism>
    <name type="scientific">Bos taurus</name>
    <name type="common">Bovine</name>
    <dbReference type="NCBI Taxonomy" id="9913"/>
    <lineage>
        <taxon>Eukaryota</taxon>
        <taxon>Metazoa</taxon>
        <taxon>Chordata</taxon>
        <taxon>Craniata</taxon>
        <taxon>Vertebrata</taxon>
        <taxon>Euteleostomi</taxon>
        <taxon>Mammalia</taxon>
        <taxon>Eutheria</taxon>
        <taxon>Laurasiatheria</taxon>
        <taxon>Artiodactyla</taxon>
        <taxon>Ruminantia</taxon>
        <taxon>Pecora</taxon>
        <taxon>Bovidae</taxon>
        <taxon>Bovinae</taxon>
        <taxon>Bos</taxon>
    </lineage>
</organism>